<keyword id="KW-0068">Autocatalytic cleavage</keyword>
<keyword id="KW-0963">Cytoplasm</keyword>
<keyword id="KW-0210">Decarboxylase</keyword>
<keyword id="KW-0456">Lyase</keyword>
<keyword id="KW-0566">Pantothenate biosynthesis</keyword>
<keyword id="KW-0670">Pyruvate</keyword>
<keyword id="KW-1185">Reference proteome</keyword>
<keyword id="KW-0704">Schiff base</keyword>
<keyword id="KW-0865">Zymogen</keyword>
<dbReference type="EC" id="4.1.1.11" evidence="1"/>
<dbReference type="EMBL" id="L47709">
    <property type="protein sequence ID" value="AAB38450.1"/>
    <property type="molecule type" value="Genomic_DNA"/>
</dbReference>
<dbReference type="EMBL" id="AL009126">
    <property type="protein sequence ID" value="CAB14157.1"/>
    <property type="molecule type" value="Genomic_DNA"/>
</dbReference>
<dbReference type="PIR" id="A69672">
    <property type="entry name" value="A69672"/>
</dbReference>
<dbReference type="RefSeq" id="NP_390122.1">
    <property type="nucleotide sequence ID" value="NC_000964.3"/>
</dbReference>
<dbReference type="RefSeq" id="WP_003225586.1">
    <property type="nucleotide sequence ID" value="NZ_OZ025638.1"/>
</dbReference>
<dbReference type="SMR" id="P52999"/>
<dbReference type="FunCoup" id="P52999">
    <property type="interactions" value="284"/>
</dbReference>
<dbReference type="STRING" id="224308.BSU22410"/>
<dbReference type="PaxDb" id="224308-BSU22410"/>
<dbReference type="EnsemblBacteria" id="CAB14157">
    <property type="protein sequence ID" value="CAB14157"/>
    <property type="gene ID" value="BSU_22410"/>
</dbReference>
<dbReference type="GeneID" id="86873220"/>
<dbReference type="GeneID" id="939033"/>
<dbReference type="KEGG" id="bsu:BSU22410"/>
<dbReference type="PATRIC" id="fig|224308.179.peg.2445"/>
<dbReference type="eggNOG" id="COG0853">
    <property type="taxonomic scope" value="Bacteria"/>
</dbReference>
<dbReference type="InParanoid" id="P52999"/>
<dbReference type="OrthoDB" id="9803983at2"/>
<dbReference type="PhylomeDB" id="P52999"/>
<dbReference type="BioCyc" id="BSUB:BSU22410-MONOMER"/>
<dbReference type="BRENDA" id="4.1.1.11">
    <property type="organism ID" value="658"/>
</dbReference>
<dbReference type="UniPathway" id="UPA00028">
    <property type="reaction ID" value="UER00002"/>
</dbReference>
<dbReference type="PRO" id="PR:P52999"/>
<dbReference type="Proteomes" id="UP000001570">
    <property type="component" value="Chromosome"/>
</dbReference>
<dbReference type="GO" id="GO:0005829">
    <property type="term" value="C:cytosol"/>
    <property type="evidence" value="ECO:0000318"/>
    <property type="project" value="GO_Central"/>
</dbReference>
<dbReference type="GO" id="GO:0004068">
    <property type="term" value="F:aspartate 1-decarboxylase activity"/>
    <property type="evidence" value="ECO:0000318"/>
    <property type="project" value="GO_Central"/>
</dbReference>
<dbReference type="GO" id="GO:0006523">
    <property type="term" value="P:alanine biosynthetic process"/>
    <property type="evidence" value="ECO:0000318"/>
    <property type="project" value="GO_Central"/>
</dbReference>
<dbReference type="GO" id="GO:0015940">
    <property type="term" value="P:pantothenate biosynthetic process"/>
    <property type="evidence" value="ECO:0000318"/>
    <property type="project" value="GO_Central"/>
</dbReference>
<dbReference type="CDD" id="cd06919">
    <property type="entry name" value="Asp_decarbox"/>
    <property type="match status" value="1"/>
</dbReference>
<dbReference type="Gene3D" id="2.40.40.20">
    <property type="match status" value="1"/>
</dbReference>
<dbReference type="HAMAP" id="MF_00446">
    <property type="entry name" value="PanD"/>
    <property type="match status" value="1"/>
</dbReference>
<dbReference type="InterPro" id="IPR009010">
    <property type="entry name" value="Asp_de-COase-like_dom_sf"/>
</dbReference>
<dbReference type="InterPro" id="IPR003190">
    <property type="entry name" value="Asp_decarbox"/>
</dbReference>
<dbReference type="NCBIfam" id="TIGR00223">
    <property type="entry name" value="panD"/>
    <property type="match status" value="1"/>
</dbReference>
<dbReference type="PANTHER" id="PTHR21012">
    <property type="entry name" value="ASPARTATE 1-DECARBOXYLASE"/>
    <property type="match status" value="1"/>
</dbReference>
<dbReference type="PANTHER" id="PTHR21012:SF0">
    <property type="entry name" value="ASPARTATE 1-DECARBOXYLASE"/>
    <property type="match status" value="1"/>
</dbReference>
<dbReference type="Pfam" id="PF02261">
    <property type="entry name" value="Asp_decarbox"/>
    <property type="match status" value="1"/>
</dbReference>
<dbReference type="PIRSF" id="PIRSF006246">
    <property type="entry name" value="Asp_decarbox"/>
    <property type="match status" value="1"/>
</dbReference>
<dbReference type="SUPFAM" id="SSF50692">
    <property type="entry name" value="ADC-like"/>
    <property type="match status" value="1"/>
</dbReference>
<feature type="chain" id="PRO_0000023035" description="Aspartate 1-decarboxylase beta chain" evidence="1">
    <location>
        <begin position="1"/>
        <end position="24"/>
    </location>
</feature>
<feature type="chain" id="PRO_0000023036" description="Aspartate 1-decarboxylase alpha chain" evidence="1">
    <location>
        <begin position="25"/>
        <end position="127"/>
    </location>
</feature>
<feature type="active site" description="Schiff-base intermediate with substrate; via pyruvic acid" evidence="1">
    <location>
        <position position="25"/>
    </location>
</feature>
<feature type="active site" description="Proton donor" evidence="1">
    <location>
        <position position="58"/>
    </location>
</feature>
<feature type="binding site" evidence="1">
    <location>
        <position position="57"/>
    </location>
    <ligand>
        <name>substrate</name>
    </ligand>
</feature>
<feature type="binding site" evidence="1">
    <location>
        <begin position="73"/>
        <end position="75"/>
    </location>
    <ligand>
        <name>substrate</name>
    </ligand>
</feature>
<feature type="modified residue" description="Pyruvic acid (Ser)" evidence="1">
    <location>
        <position position="25"/>
    </location>
</feature>
<reference key="1">
    <citation type="journal article" date="1996" name="Microbiology">
        <title>Sequence analysis of the Bacillus subtilis chromosome region between the serA and kdg loci cloned in a yeast artificial chromosome.</title>
        <authorList>
            <person name="Sorokin A.V."/>
            <person name="Azevedo V."/>
            <person name="Zumstein E."/>
            <person name="Galleron N."/>
            <person name="Ehrlich S.D."/>
            <person name="Serror P."/>
        </authorList>
    </citation>
    <scope>NUCLEOTIDE SEQUENCE [GENOMIC DNA]</scope>
    <source>
        <strain>168 / Marburg / ATCC 6051 / DSM 10 / JCM 1465 / NBRC 13719 / NCIMB 3610 / NRRL NRS-744 / VKM B-501</strain>
    </source>
</reference>
<reference key="2">
    <citation type="journal article" date="1997" name="Nature">
        <title>The complete genome sequence of the Gram-positive bacterium Bacillus subtilis.</title>
        <authorList>
            <person name="Kunst F."/>
            <person name="Ogasawara N."/>
            <person name="Moszer I."/>
            <person name="Albertini A.M."/>
            <person name="Alloni G."/>
            <person name="Azevedo V."/>
            <person name="Bertero M.G."/>
            <person name="Bessieres P."/>
            <person name="Bolotin A."/>
            <person name="Borchert S."/>
            <person name="Borriss R."/>
            <person name="Boursier L."/>
            <person name="Brans A."/>
            <person name="Braun M."/>
            <person name="Brignell S.C."/>
            <person name="Bron S."/>
            <person name="Brouillet S."/>
            <person name="Bruschi C.V."/>
            <person name="Caldwell B."/>
            <person name="Capuano V."/>
            <person name="Carter N.M."/>
            <person name="Choi S.-K."/>
            <person name="Codani J.-J."/>
            <person name="Connerton I.F."/>
            <person name="Cummings N.J."/>
            <person name="Daniel R.A."/>
            <person name="Denizot F."/>
            <person name="Devine K.M."/>
            <person name="Duesterhoeft A."/>
            <person name="Ehrlich S.D."/>
            <person name="Emmerson P.T."/>
            <person name="Entian K.-D."/>
            <person name="Errington J."/>
            <person name="Fabret C."/>
            <person name="Ferrari E."/>
            <person name="Foulger D."/>
            <person name="Fritz C."/>
            <person name="Fujita M."/>
            <person name="Fujita Y."/>
            <person name="Fuma S."/>
            <person name="Galizzi A."/>
            <person name="Galleron N."/>
            <person name="Ghim S.-Y."/>
            <person name="Glaser P."/>
            <person name="Goffeau A."/>
            <person name="Golightly E.J."/>
            <person name="Grandi G."/>
            <person name="Guiseppi G."/>
            <person name="Guy B.J."/>
            <person name="Haga K."/>
            <person name="Haiech J."/>
            <person name="Harwood C.R."/>
            <person name="Henaut A."/>
            <person name="Hilbert H."/>
            <person name="Holsappel S."/>
            <person name="Hosono S."/>
            <person name="Hullo M.-F."/>
            <person name="Itaya M."/>
            <person name="Jones L.-M."/>
            <person name="Joris B."/>
            <person name="Karamata D."/>
            <person name="Kasahara Y."/>
            <person name="Klaerr-Blanchard M."/>
            <person name="Klein C."/>
            <person name="Kobayashi Y."/>
            <person name="Koetter P."/>
            <person name="Koningstein G."/>
            <person name="Krogh S."/>
            <person name="Kumano M."/>
            <person name="Kurita K."/>
            <person name="Lapidus A."/>
            <person name="Lardinois S."/>
            <person name="Lauber J."/>
            <person name="Lazarevic V."/>
            <person name="Lee S.-M."/>
            <person name="Levine A."/>
            <person name="Liu H."/>
            <person name="Masuda S."/>
            <person name="Mauel C."/>
            <person name="Medigue C."/>
            <person name="Medina N."/>
            <person name="Mellado R.P."/>
            <person name="Mizuno M."/>
            <person name="Moestl D."/>
            <person name="Nakai S."/>
            <person name="Noback M."/>
            <person name="Noone D."/>
            <person name="O'Reilly M."/>
            <person name="Ogawa K."/>
            <person name="Ogiwara A."/>
            <person name="Oudega B."/>
            <person name="Park S.-H."/>
            <person name="Parro V."/>
            <person name="Pohl T.M."/>
            <person name="Portetelle D."/>
            <person name="Porwollik S."/>
            <person name="Prescott A.M."/>
            <person name="Presecan E."/>
            <person name="Pujic P."/>
            <person name="Purnelle B."/>
            <person name="Rapoport G."/>
            <person name="Rey M."/>
            <person name="Reynolds S."/>
            <person name="Rieger M."/>
            <person name="Rivolta C."/>
            <person name="Rocha E."/>
            <person name="Roche B."/>
            <person name="Rose M."/>
            <person name="Sadaie Y."/>
            <person name="Sato T."/>
            <person name="Scanlan E."/>
            <person name="Schleich S."/>
            <person name="Schroeter R."/>
            <person name="Scoffone F."/>
            <person name="Sekiguchi J."/>
            <person name="Sekowska A."/>
            <person name="Seror S.J."/>
            <person name="Serror P."/>
            <person name="Shin B.-S."/>
            <person name="Soldo B."/>
            <person name="Sorokin A."/>
            <person name="Tacconi E."/>
            <person name="Takagi T."/>
            <person name="Takahashi H."/>
            <person name="Takemaru K."/>
            <person name="Takeuchi M."/>
            <person name="Tamakoshi A."/>
            <person name="Tanaka T."/>
            <person name="Terpstra P."/>
            <person name="Tognoni A."/>
            <person name="Tosato V."/>
            <person name="Uchiyama S."/>
            <person name="Vandenbol M."/>
            <person name="Vannier F."/>
            <person name="Vassarotti A."/>
            <person name="Viari A."/>
            <person name="Wambutt R."/>
            <person name="Wedler E."/>
            <person name="Wedler H."/>
            <person name="Weitzenegger T."/>
            <person name="Winters P."/>
            <person name="Wipat A."/>
            <person name="Yamamoto H."/>
            <person name="Yamane K."/>
            <person name="Yasumoto K."/>
            <person name="Yata K."/>
            <person name="Yoshida K."/>
            <person name="Yoshikawa H.-F."/>
            <person name="Zumstein E."/>
            <person name="Yoshikawa H."/>
            <person name="Danchin A."/>
        </authorList>
    </citation>
    <scope>NUCLEOTIDE SEQUENCE [LARGE SCALE GENOMIC DNA]</scope>
    <source>
        <strain>168</strain>
    </source>
</reference>
<comment type="function">
    <text evidence="1">Catalyzes the pyruvoyl-dependent decarboxylation of aspartate to produce beta-alanine.</text>
</comment>
<comment type="catalytic activity">
    <reaction evidence="1">
        <text>L-aspartate + H(+) = beta-alanine + CO2</text>
        <dbReference type="Rhea" id="RHEA:19497"/>
        <dbReference type="ChEBI" id="CHEBI:15378"/>
        <dbReference type="ChEBI" id="CHEBI:16526"/>
        <dbReference type="ChEBI" id="CHEBI:29991"/>
        <dbReference type="ChEBI" id="CHEBI:57966"/>
        <dbReference type="EC" id="4.1.1.11"/>
    </reaction>
</comment>
<comment type="cofactor">
    <cofactor evidence="1">
        <name>pyruvate</name>
        <dbReference type="ChEBI" id="CHEBI:15361"/>
    </cofactor>
    <text evidence="1">Binds 1 pyruvoyl group covalently per subunit.</text>
</comment>
<comment type="pathway">
    <text evidence="1">Cofactor biosynthesis; (R)-pantothenate biosynthesis; beta-alanine from L-aspartate: step 1/1.</text>
</comment>
<comment type="subunit">
    <text evidence="1">Heterooctamer of four alpha and four beta subunits.</text>
</comment>
<comment type="subcellular location">
    <subcellularLocation>
        <location evidence="1">Cytoplasm</location>
    </subcellularLocation>
</comment>
<comment type="PTM">
    <text evidence="1">Is synthesized initially as an inactive proenzyme, which is activated by self-cleavage at a specific serine bond to produce a beta-subunit with a hydroxyl group at its C-terminus and an alpha-subunit with a pyruvoyl group at its N-terminus.</text>
</comment>
<comment type="similarity">
    <text evidence="1">Belongs to the PanD family.</text>
</comment>
<proteinExistence type="inferred from homology"/>
<gene>
    <name evidence="1" type="primary">panD</name>
    <name type="ordered locus">BSU22410</name>
</gene>
<evidence type="ECO:0000255" key="1">
    <source>
        <dbReference type="HAMAP-Rule" id="MF_00446"/>
    </source>
</evidence>
<accession>P52999</accession>
<sequence length="127" mass="13900">MYRTMMSGKLHRATVTEANLNYVGSITIDEDLIDAVGMLPNEKVQIVNNNNGARLETYIIPGKRGSGVICLNGAAARLVQEGDKVIIISYKMMSDQEAASHEPKVAVLNDQNKIEQMLGNEPARTIL</sequence>
<name>PAND_BACSU</name>
<organism>
    <name type="scientific">Bacillus subtilis (strain 168)</name>
    <dbReference type="NCBI Taxonomy" id="224308"/>
    <lineage>
        <taxon>Bacteria</taxon>
        <taxon>Bacillati</taxon>
        <taxon>Bacillota</taxon>
        <taxon>Bacilli</taxon>
        <taxon>Bacillales</taxon>
        <taxon>Bacillaceae</taxon>
        <taxon>Bacillus</taxon>
    </lineage>
</organism>
<protein>
    <recommendedName>
        <fullName evidence="1">Aspartate 1-decarboxylase</fullName>
        <ecNumber evidence="1">4.1.1.11</ecNumber>
    </recommendedName>
    <alternativeName>
        <fullName evidence="1">Aspartate alpha-decarboxylase</fullName>
    </alternativeName>
    <component>
        <recommendedName>
            <fullName evidence="1">Aspartate 1-decarboxylase beta chain</fullName>
        </recommendedName>
    </component>
    <component>
        <recommendedName>
            <fullName evidence="1">Aspartate 1-decarboxylase alpha chain</fullName>
        </recommendedName>
    </component>
</protein>